<organism>
    <name type="scientific">Rattus norvegicus</name>
    <name type="common">Rat</name>
    <dbReference type="NCBI Taxonomy" id="10116"/>
    <lineage>
        <taxon>Eukaryota</taxon>
        <taxon>Metazoa</taxon>
        <taxon>Chordata</taxon>
        <taxon>Craniata</taxon>
        <taxon>Vertebrata</taxon>
        <taxon>Euteleostomi</taxon>
        <taxon>Mammalia</taxon>
        <taxon>Eutheria</taxon>
        <taxon>Euarchontoglires</taxon>
        <taxon>Glires</taxon>
        <taxon>Rodentia</taxon>
        <taxon>Myomorpha</taxon>
        <taxon>Muroidea</taxon>
        <taxon>Muridae</taxon>
        <taxon>Murinae</taxon>
        <taxon>Rattus</taxon>
    </lineage>
</organism>
<dbReference type="EMBL" id="L22022">
    <property type="protein sequence ID" value="AAA41729.1"/>
    <property type="molecule type" value="mRNA"/>
</dbReference>
<dbReference type="EMBL" id="S56968">
    <property type="protein sequence ID" value="AAB25532.1"/>
    <property type="molecule type" value="mRNA"/>
</dbReference>
<dbReference type="PIR" id="I65413">
    <property type="entry name" value="I65413"/>
</dbReference>
<dbReference type="RefSeq" id="NP_758824.1">
    <property type="nucleotide sequence ID" value="NM_172321.4"/>
</dbReference>
<dbReference type="RefSeq" id="XP_038934450.1">
    <property type="nucleotide sequence ID" value="XM_039078522.2"/>
</dbReference>
<dbReference type="SMR" id="Q08469"/>
<dbReference type="FunCoup" id="Q08469">
    <property type="interactions" value="2519"/>
</dbReference>
<dbReference type="STRING" id="10116.ENSRNOP00000073005"/>
<dbReference type="GlyCosmos" id="Q08469">
    <property type="glycosylation" value="3 sites, No reported glycans"/>
</dbReference>
<dbReference type="GlyGen" id="Q08469">
    <property type="glycosylation" value="3 sites"/>
</dbReference>
<dbReference type="iPTMnet" id="Q08469"/>
<dbReference type="PhosphoSitePlus" id="Q08469"/>
<dbReference type="PaxDb" id="10116-ENSRNOP00000032996"/>
<dbReference type="Ensembl" id="ENSRNOT00000029208.6">
    <property type="protein sequence ID" value="ENSRNOP00000032996.4"/>
    <property type="gene ID" value="ENSRNOG00000027468.6"/>
</dbReference>
<dbReference type="GeneID" id="282712"/>
<dbReference type="KEGG" id="rno:282712"/>
<dbReference type="UCSC" id="RGD:628664">
    <property type="organism name" value="rat"/>
</dbReference>
<dbReference type="AGR" id="RGD:628664"/>
<dbReference type="CTD" id="55117"/>
<dbReference type="RGD" id="628664">
    <property type="gene designation" value="Slc6a15"/>
</dbReference>
<dbReference type="eggNOG" id="KOG3659">
    <property type="taxonomic scope" value="Eukaryota"/>
</dbReference>
<dbReference type="GeneTree" id="ENSGT00940000157277"/>
<dbReference type="HOGENOM" id="CLU_006855_7_1_1"/>
<dbReference type="InParanoid" id="Q08469"/>
<dbReference type="OMA" id="TMTPPSY"/>
<dbReference type="OrthoDB" id="6581954at2759"/>
<dbReference type="PhylomeDB" id="Q08469"/>
<dbReference type="TreeFam" id="TF352709"/>
<dbReference type="Reactome" id="R-RNO-352230">
    <property type="pathway name" value="Amino acid transport across the plasma membrane"/>
</dbReference>
<dbReference type="Reactome" id="R-RNO-442660">
    <property type="pathway name" value="Na+/Cl- dependent neurotransmitter transporters"/>
</dbReference>
<dbReference type="PRO" id="PR:Q08469"/>
<dbReference type="Proteomes" id="UP000002494">
    <property type="component" value="Chromosome 7"/>
</dbReference>
<dbReference type="Bgee" id="ENSRNOG00000027468">
    <property type="expression patterns" value="Expressed in Ammon's horn and 9 other cell types or tissues"/>
</dbReference>
<dbReference type="GO" id="GO:0016020">
    <property type="term" value="C:membrane"/>
    <property type="evidence" value="ECO:0000250"/>
    <property type="project" value="UniProtKB"/>
</dbReference>
<dbReference type="GO" id="GO:0005886">
    <property type="term" value="C:plasma membrane"/>
    <property type="evidence" value="ECO:0000318"/>
    <property type="project" value="GO_Central"/>
</dbReference>
<dbReference type="GO" id="GO:0015657">
    <property type="term" value="F:branched-chain amino acid:sodium symporter activity"/>
    <property type="evidence" value="ECO:0000250"/>
    <property type="project" value="UniProtKB"/>
</dbReference>
<dbReference type="GO" id="GO:0005295">
    <property type="term" value="F:neutral L-amino acid:sodium symporter activity"/>
    <property type="evidence" value="ECO:0000250"/>
    <property type="project" value="UniProtKB"/>
</dbReference>
<dbReference type="GO" id="GO:0005298">
    <property type="term" value="F:proline:sodium symporter activity"/>
    <property type="evidence" value="ECO:0000250"/>
    <property type="project" value="UniProtKB"/>
</dbReference>
<dbReference type="GO" id="GO:0015820">
    <property type="term" value="P:L-leucine transport"/>
    <property type="evidence" value="ECO:0000266"/>
    <property type="project" value="RGD"/>
</dbReference>
<dbReference type="GO" id="GO:0006836">
    <property type="term" value="P:neurotransmitter transport"/>
    <property type="evidence" value="ECO:0007669"/>
    <property type="project" value="UniProtKB-KW"/>
</dbReference>
<dbReference type="GO" id="GO:0015804">
    <property type="term" value="P:neutral amino acid transport"/>
    <property type="evidence" value="ECO:0000250"/>
    <property type="project" value="UniProtKB"/>
</dbReference>
<dbReference type="GO" id="GO:0015824">
    <property type="term" value="P:proline transport"/>
    <property type="evidence" value="ECO:0000266"/>
    <property type="project" value="RGD"/>
</dbReference>
<dbReference type="GO" id="GO:0035725">
    <property type="term" value="P:sodium ion transmembrane transport"/>
    <property type="evidence" value="ECO:0000318"/>
    <property type="project" value="GO_Central"/>
</dbReference>
<dbReference type="CDD" id="cd11522">
    <property type="entry name" value="SLC6sbd_SBAT1"/>
    <property type="match status" value="1"/>
</dbReference>
<dbReference type="InterPro" id="IPR042934">
    <property type="entry name" value="B(0)AT2"/>
</dbReference>
<dbReference type="InterPro" id="IPR000175">
    <property type="entry name" value="Na/ntran_symport"/>
</dbReference>
<dbReference type="InterPro" id="IPR002438">
    <property type="entry name" value="Neutral_aa_SLC6"/>
</dbReference>
<dbReference type="InterPro" id="IPR037272">
    <property type="entry name" value="SNS_sf"/>
</dbReference>
<dbReference type="NCBIfam" id="NF037979">
    <property type="entry name" value="Na_transp"/>
    <property type="match status" value="1"/>
</dbReference>
<dbReference type="PANTHER" id="PTHR11616:SF101">
    <property type="entry name" value="SODIUM-DEPENDENT NEUTRAL AMINO ACID TRANSPORTER B(0)AT2"/>
    <property type="match status" value="1"/>
</dbReference>
<dbReference type="PANTHER" id="PTHR11616">
    <property type="entry name" value="SODIUM/CHLORIDE DEPENDENT TRANSPORTER"/>
    <property type="match status" value="1"/>
</dbReference>
<dbReference type="Pfam" id="PF00209">
    <property type="entry name" value="SNF"/>
    <property type="match status" value="1"/>
</dbReference>
<dbReference type="PRINTS" id="PR00176">
    <property type="entry name" value="NANEUSMPORT"/>
</dbReference>
<dbReference type="PRINTS" id="PR01206">
    <property type="entry name" value="ORPHTRNSPORT"/>
</dbReference>
<dbReference type="SUPFAM" id="SSF161070">
    <property type="entry name" value="SNF-like"/>
    <property type="match status" value="1"/>
</dbReference>
<dbReference type="PROSITE" id="PS00610">
    <property type="entry name" value="NA_NEUROTRAN_SYMP_1"/>
    <property type="match status" value="1"/>
</dbReference>
<dbReference type="PROSITE" id="PS00754">
    <property type="entry name" value="NA_NEUROTRAN_SYMP_2"/>
    <property type="match status" value="1"/>
</dbReference>
<dbReference type="PROSITE" id="PS50267">
    <property type="entry name" value="NA_NEUROTRAN_SYMP_3"/>
    <property type="match status" value="1"/>
</dbReference>
<name>S6A15_RAT</name>
<accession>Q08469</accession>
<accession>Q63838</accession>
<keyword id="KW-0029">Amino-acid transport</keyword>
<keyword id="KW-0325">Glycoprotein</keyword>
<keyword id="KW-0406">Ion transport</keyword>
<keyword id="KW-0472">Membrane</keyword>
<keyword id="KW-0532">Neurotransmitter transport</keyword>
<keyword id="KW-0597">Phosphoprotein</keyword>
<keyword id="KW-1185">Reference proteome</keyword>
<keyword id="KW-0915">Sodium</keyword>
<keyword id="KW-0739">Sodium transport</keyword>
<keyword id="KW-0769">Symport</keyword>
<keyword id="KW-0812">Transmembrane</keyword>
<keyword id="KW-1133">Transmembrane helix</keyword>
<keyword id="KW-0813">Transport</keyword>
<gene>
    <name type="primary">Slc6a15</name>
    <name type="synonym">Ntt73</name>
</gene>
<feature type="chain" id="PRO_0000214800" description="Sodium-dependent neutral amino acid transporter B(0)AT2">
    <location>
        <begin position="1"/>
        <end position="729"/>
    </location>
</feature>
<feature type="topological domain" description="Cytoplasmic" evidence="3">
    <location>
        <begin position="1"/>
        <end position="69"/>
    </location>
</feature>
<feature type="transmembrane region" description="Helical; Name=1" evidence="3">
    <location>
        <begin position="70"/>
        <end position="90"/>
    </location>
</feature>
<feature type="transmembrane region" description="Helical; Name=2" evidence="3">
    <location>
        <begin position="98"/>
        <end position="117"/>
    </location>
</feature>
<feature type="transmembrane region" description="Helical; Name=3" evidence="3">
    <location>
        <begin position="142"/>
        <end position="162"/>
    </location>
</feature>
<feature type="topological domain" description="Extracellular" evidence="3">
    <location>
        <begin position="163"/>
        <end position="225"/>
    </location>
</feature>
<feature type="transmembrane region" description="Helical; Name=4" evidence="3">
    <location>
        <begin position="226"/>
        <end position="244"/>
    </location>
</feature>
<feature type="transmembrane region" description="Helical; Name=5" evidence="3">
    <location>
        <begin position="253"/>
        <end position="270"/>
    </location>
</feature>
<feature type="transmembrane region" description="Helical; Name=6" evidence="3">
    <location>
        <begin position="306"/>
        <end position="323"/>
    </location>
</feature>
<feature type="transmembrane region" description="Helical; Name=7" evidence="3">
    <location>
        <begin position="335"/>
        <end position="356"/>
    </location>
</feature>
<feature type="topological domain" description="Extracellular" evidence="3">
    <location>
        <begin position="357"/>
        <end position="452"/>
    </location>
</feature>
<feature type="transmembrane region" description="Helical; Name=8" evidence="3">
    <location>
        <begin position="453"/>
        <end position="472"/>
    </location>
</feature>
<feature type="transmembrane region" description="Helical; Name=9" evidence="3">
    <location>
        <begin position="496"/>
        <end position="514"/>
    </location>
</feature>
<feature type="transmembrane region" description="Helical; Name=10" evidence="3">
    <location>
        <begin position="530"/>
        <end position="550"/>
    </location>
</feature>
<feature type="transmembrane region" description="Helical; Name=11" evidence="3">
    <location>
        <begin position="571"/>
        <end position="592"/>
    </location>
</feature>
<feature type="transmembrane region" description="Helical; Name=12" evidence="3">
    <location>
        <begin position="620"/>
        <end position="642"/>
    </location>
</feature>
<feature type="topological domain" description="Cytoplasmic" evidence="3">
    <location>
        <begin position="643"/>
        <end position="729"/>
    </location>
</feature>
<feature type="modified residue" description="Phosphoserine" evidence="2">
    <location>
        <position position="25"/>
    </location>
</feature>
<feature type="modified residue" description="Phosphoserine" evidence="2">
    <location>
        <position position="55"/>
    </location>
</feature>
<feature type="modified residue" description="Phosphoserine" evidence="2">
    <location>
        <position position="687"/>
    </location>
</feature>
<feature type="modified residue" description="Phosphoserine" evidence="6">
    <location>
        <position position="699"/>
    </location>
</feature>
<feature type="modified residue" description="Phosphoserine" evidence="6">
    <location>
        <position position="701"/>
    </location>
</feature>
<feature type="glycosylation site" description="N-linked (GlcNAc...) asparagine" evidence="3">
    <location>
        <position position="187"/>
    </location>
</feature>
<feature type="glycosylation site" description="N-linked (GlcNAc...) asparagine" evidence="3">
    <location>
        <position position="383"/>
    </location>
</feature>
<feature type="glycosylation site" description="N-linked (GlcNAc...) asparagine" evidence="3">
    <location>
        <position position="394"/>
    </location>
</feature>
<feature type="sequence conflict" description="In Ref. 1; AAB25532." evidence="5" ref="1">
    <original>MPK</original>
    <variation>IP</variation>
    <location>
        <begin position="1"/>
        <end position="3"/>
    </location>
</feature>
<sequence>MPKNSKVVKRDLDDDVIESVKDLLSNEDSVEDVSKKSELIVDVQEEKDTDAEDGSEVDDERPAWNSKLQYILAQVGFSVGLGNVWRFPYLCQKNGGGAYLLPYLILLLVIGIPLFFLELSVGQRIRRGSIGVWNYISPKLGGIGFASCVVCYFVALYYNVIIGWTLFYFSQSFQQPLPWDQCPLVKNASHTYIEPECEKSSATTYYWYREALAISSSISESGGLNWKMTGCLLAAWVMVCLAMIKGIQSSGKIMYFSSLFPYVVLICFLIRSLLLNGSIDGIRHMFTPKLEMMLEPKVWREAATQVFFALGLGFGGVIAFSSYNKRDNNCHFDAVLVSFINFFTSVLATLVVFAVLGFKANIVNEKCISQNSEMILKLLKTGNVSWDVIPRHINLSAVTAEDYHVVYDIIQKVKEEEFAVLHLKACQIEDELNKAVQGTGLAFIAFTEAMTHFPASPFWSVMFFLMLINLGLGSMFGTIEGIITPVVDTFKVRKEILTVICCLLAFCIGLMFVQRSGNYFVTMFDDYSATLPLLIVVILENIAVSFVYGIDKFLEDLTDMLGFAPSKYYYYMWKYISPLMLVTLLIASIVNMGLSPPGYNAWIKEKASEEFLSYPMWGMVVCFSLMVLAILPVPVVFVIRRCNLIDDSSGNLASVTYKRGRVLKEPVNLDGDDASLIHGKIPSEMSSPNFGKNIYRKQSGSPTLDTAPNGRYGIGYLMADMPDMPESDL</sequence>
<comment type="function">
    <text evidence="2">Functions as a sodium-dependent neutral amino acid transporter. Exhibits preference for the branched-chain amino acids, particularly leucine, valine and isoleucine and methionine. Can also transport low-affinity substrates such as alanine, phenylalanine, glutamine and pipecolic acid. Mediates the saturable, pH-sensitive and electrogenic cotransport of proline and sodium ions with a stoichiometry of 1:1. May have a role as transporter for neurotransmitter precursors into neurons. In contrast to other members of the neurotransmitter transporter family, does not appear to be chloride-dependent.</text>
</comment>
<comment type="catalytic activity">
    <reaction evidence="2">
        <text>L-leucine(in) + Na(+)(in) = L-leucine(out) + Na(+)(out)</text>
        <dbReference type="Rhea" id="RHEA:29263"/>
        <dbReference type="ChEBI" id="CHEBI:29101"/>
        <dbReference type="ChEBI" id="CHEBI:57427"/>
    </reaction>
</comment>
<comment type="catalytic activity">
    <reaction evidence="2">
        <text>L-isoleucine(in) + Na(+)(in) = L-isoleucine(out) + Na(+)(out)</text>
        <dbReference type="Rhea" id="RHEA:29275"/>
        <dbReference type="ChEBI" id="CHEBI:29101"/>
        <dbReference type="ChEBI" id="CHEBI:58045"/>
    </reaction>
</comment>
<comment type="catalytic activity">
    <reaction evidence="2">
        <text>L-methionine(in) + Na(+)(in) = L-methionine(out) + Na(+)(out)</text>
        <dbReference type="Rhea" id="RHEA:68240"/>
        <dbReference type="ChEBI" id="CHEBI:29101"/>
        <dbReference type="ChEBI" id="CHEBI:57844"/>
    </reaction>
</comment>
<comment type="catalytic activity">
    <reaction evidence="2">
        <text>L-proline(in) + Na(+)(in) = L-proline(out) + Na(+)(out)</text>
        <dbReference type="Rhea" id="RHEA:28967"/>
        <dbReference type="ChEBI" id="CHEBI:29101"/>
        <dbReference type="ChEBI" id="CHEBI:60039"/>
    </reaction>
</comment>
<comment type="catalytic activity">
    <reaction evidence="2">
        <text>L-alanine(in) + Na(+)(in) = L-alanine(out) + Na(+)(out)</text>
        <dbReference type="Rhea" id="RHEA:29283"/>
        <dbReference type="ChEBI" id="CHEBI:29101"/>
        <dbReference type="ChEBI" id="CHEBI:57972"/>
    </reaction>
</comment>
<comment type="catalytic activity">
    <reaction evidence="2">
        <text>L-asparagine(in) + Na(+)(in) = L-asparagine(out) + Na(+)(out)</text>
        <dbReference type="Rhea" id="RHEA:71383"/>
        <dbReference type="ChEBI" id="CHEBI:29101"/>
        <dbReference type="ChEBI" id="CHEBI:58048"/>
    </reaction>
</comment>
<comment type="catalytic activity">
    <reaction evidence="2">
        <text>L-valine(in) + Na(+)(in) = L-valine(out) + Na(+)(out)</text>
        <dbReference type="Rhea" id="RHEA:29267"/>
        <dbReference type="ChEBI" id="CHEBI:29101"/>
        <dbReference type="ChEBI" id="CHEBI:57762"/>
    </reaction>
</comment>
<comment type="catalytic activity">
    <reaction evidence="2">
        <text>L-cysteine(in) + Na(+)(in) = L-cysteine(out) + Na(+)(out)</text>
        <dbReference type="Rhea" id="RHEA:68232"/>
        <dbReference type="ChEBI" id="CHEBI:29101"/>
        <dbReference type="ChEBI" id="CHEBI:35235"/>
    </reaction>
</comment>
<comment type="catalytic activity">
    <reaction evidence="2">
        <text>L-glutamine(in) + Na(+)(in) = L-glutamine(out) + Na(+)(out)</text>
        <dbReference type="Rhea" id="RHEA:68236"/>
        <dbReference type="ChEBI" id="CHEBI:29101"/>
        <dbReference type="ChEBI" id="CHEBI:58359"/>
    </reaction>
</comment>
<comment type="catalytic activity">
    <reaction evidence="2">
        <text>L-serine(in) + Na(+)(in) = L-serine(out) + Na(+)(out)</text>
        <dbReference type="Rhea" id="RHEA:29575"/>
        <dbReference type="ChEBI" id="CHEBI:29101"/>
        <dbReference type="ChEBI" id="CHEBI:33384"/>
    </reaction>
</comment>
<comment type="catalytic activity">
    <reaction evidence="2">
        <text>L-threonine(in) + Na(+)(in) = L-threonine(out) + Na(+)(out)</text>
        <dbReference type="Rhea" id="RHEA:69999"/>
        <dbReference type="ChEBI" id="CHEBI:29101"/>
        <dbReference type="ChEBI" id="CHEBI:57926"/>
    </reaction>
</comment>
<comment type="catalytic activity">
    <reaction evidence="1">
        <text>L-pipecolate(in) + Na(+)(in) = L-pipecolate(out) + Na(+)(out)</text>
        <dbReference type="Rhea" id="RHEA:71387"/>
        <dbReference type="ChEBI" id="CHEBI:29101"/>
        <dbReference type="ChEBI" id="CHEBI:61185"/>
    </reaction>
</comment>
<comment type="catalytic activity">
    <reaction evidence="1">
        <text>L-phenylalanine(in) + Na(+)(in) = L-phenylalanine(out) + Na(+)(out)</text>
        <dbReference type="Rhea" id="RHEA:68244"/>
        <dbReference type="ChEBI" id="CHEBI:29101"/>
        <dbReference type="ChEBI" id="CHEBI:58095"/>
    </reaction>
</comment>
<comment type="subcellular location">
    <subcellularLocation>
        <location evidence="2">Membrane</location>
        <topology evidence="2">Multi-pass membrane protein</topology>
    </subcellularLocation>
</comment>
<comment type="tissue specificity">
    <text evidence="4">Widely distributed in the central nervous system, including the olfactory bulb, the hypothalamus, the cerebral cortex, the hippocampus, and the cerebellum. In addition, intense expression is found in the motor nuclei including the oculomotor nucleus, abducens nucleus, trigeminal motor nucleus, facial nucleus, hypoglossal nucleus and ventral horn of spinal cord. Intense hybridization signals are also observed in the nuclei containing monoaminergic neurons, such as locus coeruleus, the substantia nigra pars compacta, the ventral tegmental area, the dorsal raphe nucleus and the median raphe nucleus.</text>
</comment>
<comment type="similarity">
    <text evidence="5">Belongs to the sodium:neurotransmitter symporter (SNF) (TC 2.A.22) family. SLC6A15 subfamily.</text>
</comment>
<reference key="1">
    <citation type="journal article" date="1992" name="Brain Res. Mol. Brain Res.">
        <title>Neurotransmitter transporter family cDNAs in a rat midbrain library: 'orphan transporters' suggest sizable structural variations.</title>
        <authorList>
            <person name="Uhl G.R."/>
            <person name="Kitayama S."/>
            <person name="Gregor P."/>
            <person name="Nanthakumar E."/>
            <person name="Persico A.M."/>
            <person name="Shimada S."/>
        </authorList>
    </citation>
    <scope>NUCLEOTIDE SEQUENCE [MRNA]</scope>
    <source>
        <tissue>Brain</tissue>
    </source>
</reference>
<reference key="2">
    <citation type="journal article" date="1996" name="Brain Res. Mol. Brain Res.">
        <title>Widespread brain distribution of mRNA encoding the orphan neurotransmitter transporter v7-3.</title>
        <authorList>
            <person name="Inoue K."/>
            <person name="Sato K."/>
            <person name="Tohyama M."/>
            <person name="Shimada S."/>
            <person name="Uhl G.R."/>
        </authorList>
    </citation>
    <scope>TISSUE SPECIFICITY</scope>
</reference>
<reference key="3">
    <citation type="journal article" date="2012" name="Nat. Commun.">
        <title>Quantitative maps of protein phosphorylation sites across 14 different rat organs and tissues.</title>
        <authorList>
            <person name="Lundby A."/>
            <person name="Secher A."/>
            <person name="Lage K."/>
            <person name="Nordsborg N.B."/>
            <person name="Dmytriyev A."/>
            <person name="Lundby C."/>
            <person name="Olsen J.V."/>
        </authorList>
    </citation>
    <scope>PHOSPHORYLATION [LARGE SCALE ANALYSIS] AT SER-699 AND SER-701</scope>
    <scope>IDENTIFICATION BY MASS SPECTROMETRY [LARGE SCALE ANALYSIS]</scope>
</reference>
<proteinExistence type="evidence at protein level"/>
<evidence type="ECO:0000250" key="1">
    <source>
        <dbReference type="UniProtKB" id="Q8BG16"/>
    </source>
</evidence>
<evidence type="ECO:0000250" key="2">
    <source>
        <dbReference type="UniProtKB" id="Q9H2J7"/>
    </source>
</evidence>
<evidence type="ECO:0000255" key="3"/>
<evidence type="ECO:0000269" key="4">
    <source>
    </source>
</evidence>
<evidence type="ECO:0000305" key="5"/>
<evidence type="ECO:0007744" key="6">
    <source>
    </source>
</evidence>
<protein>
    <recommendedName>
        <fullName>Sodium-dependent neutral amino acid transporter B(0)AT2</fullName>
    </recommendedName>
    <alternativeName>
        <fullName>Solute carrier family 6 member 15</fullName>
    </alternativeName>
    <alternativeName>
        <fullName>Transporter v7-3</fullName>
    </alternativeName>
    <alternativeName>
        <fullName>sodium- and chloride-dependent neurotransmitter transporter NTT73</fullName>
    </alternativeName>
</protein>